<gene>
    <name type="primary">rps6</name>
</gene>
<evidence type="ECO:0000250" key="1">
    <source>
        <dbReference type="UniProtKB" id="P62753"/>
    </source>
</evidence>
<evidence type="ECO:0000256" key="2">
    <source>
        <dbReference type="SAM" id="MobiDB-lite"/>
    </source>
</evidence>
<evidence type="ECO:0000305" key="3"/>
<accession>P39017</accession>
<accession>Q5D086</accession>
<keyword id="KW-0963">Cytoplasm</keyword>
<keyword id="KW-0539">Nucleus</keyword>
<keyword id="KW-0597">Phosphoprotein</keyword>
<keyword id="KW-1185">Reference proteome</keyword>
<keyword id="KW-0687">Ribonucleoprotein</keyword>
<keyword id="KW-0689">Ribosomal protein</keyword>
<name>RS6_XENLA</name>
<reference key="1">
    <citation type="journal article" date="1993" name="Nucleic Acids Res.">
        <title>A complete cDNA sequence for ribosomal protein S6 of Xenopus laevis.</title>
        <authorList>
            <person name="Odenwald P.W."/>
            <person name="Jones K.L."/>
            <person name="Dimario P.J."/>
        </authorList>
    </citation>
    <scope>NUCLEOTIDE SEQUENCE [MRNA]</scope>
    <source>
        <tissue>Ovary</tissue>
    </source>
</reference>
<reference key="2">
    <citation type="journal article" date="1999" name="Gene">
        <title>Isolation, characterization and expression of the Xenopus laevis ribosomal protein S6 gene.</title>
        <authorList>
            <person name="Antoine M."/>
            <person name="Kiefer P."/>
        </authorList>
    </citation>
    <scope>NUCLEOTIDE SEQUENCE [GENOMIC DNA]</scope>
</reference>
<reference key="3">
    <citation type="submission" date="2003-06" db="EMBL/GenBank/DDBJ databases">
        <authorList>
            <consortium name="NIH - Xenopus Gene Collection (XGC) project"/>
        </authorList>
    </citation>
    <scope>NUCLEOTIDE SEQUENCE [LARGE SCALE MRNA]</scope>
</reference>
<sequence length="249" mass="28677">MKLNISFPATGCQKLIEVEDERKLRTFYEKRMATEVAADPLGDEWKGYVVRISGGNDKQGFPMKQGVLTHGRVRLLLSKGHSCYRPRRTGERKRKSVRGCIVDANLSVLNLVIVRKGEKDIPGLTDNTVPRRLGPKRASRIRKLFNLSKEDDVRQYVVRKPLAKEGKKPRTKAPKIQRLVTPRVLQHKRRRIALKKQRTQKNKEEASEYAKLLAKRSKEAKEKRQEQIAKRRRLSSLRASTSKSESSQK</sequence>
<protein>
    <recommendedName>
        <fullName evidence="3">Small ribosomal subunit protein eS6</fullName>
    </recommendedName>
    <alternativeName>
        <fullName>40S ribosomal protein S6</fullName>
    </alternativeName>
</protein>
<proteinExistence type="evidence at transcript level"/>
<feature type="chain" id="PRO_0000137318" description="Small ribosomal subunit protein eS6">
    <location>
        <begin position="1"/>
        <end position="249"/>
    </location>
</feature>
<feature type="region of interest" description="Disordered" evidence="2">
    <location>
        <begin position="161"/>
        <end position="181"/>
    </location>
</feature>
<feature type="region of interest" description="Disordered" evidence="2">
    <location>
        <begin position="194"/>
        <end position="249"/>
    </location>
</feature>
<feature type="compositionally biased region" description="Basic and acidic residues" evidence="2">
    <location>
        <begin position="216"/>
        <end position="229"/>
    </location>
</feature>
<feature type="compositionally biased region" description="Low complexity" evidence="2">
    <location>
        <begin position="236"/>
        <end position="249"/>
    </location>
</feature>
<feature type="modified residue" description="Phosphoserine" evidence="1">
    <location>
        <position position="235"/>
    </location>
</feature>
<feature type="modified residue" description="Phosphoserine" evidence="1">
    <location>
        <position position="236"/>
    </location>
</feature>
<feature type="modified residue" description="Phosphoserine" evidence="1">
    <location>
        <position position="240"/>
    </location>
</feature>
<feature type="modified residue" description="Phosphoserine" evidence="1">
    <location>
        <position position="244"/>
    </location>
</feature>
<feature type="modified residue" description="Phosphoserine" evidence="1">
    <location>
        <position position="247"/>
    </location>
</feature>
<dbReference type="EMBL" id="L19996">
    <property type="protein sequence ID" value="AAC38014.1"/>
    <property type="molecule type" value="mRNA"/>
</dbReference>
<dbReference type="EMBL" id="AF020551">
    <property type="protein sequence ID" value="AAD01647.1"/>
    <property type="molecule type" value="Genomic_DNA"/>
</dbReference>
<dbReference type="EMBL" id="BC054151">
    <property type="protein sequence ID" value="AAH54151.1"/>
    <property type="molecule type" value="mRNA"/>
</dbReference>
<dbReference type="PIR" id="S41468">
    <property type="entry name" value="S41468"/>
</dbReference>
<dbReference type="RefSeq" id="NP_001080589.1">
    <property type="nucleotide sequence ID" value="NM_001087120.2"/>
</dbReference>
<dbReference type="SMR" id="P39017"/>
<dbReference type="BioGRID" id="98523">
    <property type="interactions" value="3"/>
</dbReference>
<dbReference type="IntAct" id="P39017">
    <property type="interactions" value="1"/>
</dbReference>
<dbReference type="DNASU" id="380281"/>
<dbReference type="GeneID" id="380281"/>
<dbReference type="KEGG" id="xla:380281"/>
<dbReference type="AGR" id="Xenbase:XB-GENE-1003294"/>
<dbReference type="CTD" id="380281"/>
<dbReference type="Xenbase" id="XB-GENE-1003294">
    <property type="gene designation" value="rps6.S"/>
</dbReference>
<dbReference type="OMA" id="KPRYKAP"/>
<dbReference type="OrthoDB" id="10260596at2759"/>
<dbReference type="Proteomes" id="UP000186698">
    <property type="component" value="Chromosome 1S"/>
</dbReference>
<dbReference type="Bgee" id="380281">
    <property type="expression patterns" value="Expressed in internal ear and 19 other cell types or tissues"/>
</dbReference>
<dbReference type="GO" id="GO:0005737">
    <property type="term" value="C:cytoplasm"/>
    <property type="evidence" value="ECO:0007669"/>
    <property type="project" value="UniProtKB-SubCell"/>
</dbReference>
<dbReference type="GO" id="GO:0005730">
    <property type="term" value="C:nucleolus"/>
    <property type="evidence" value="ECO:0007669"/>
    <property type="project" value="UniProtKB-SubCell"/>
</dbReference>
<dbReference type="GO" id="GO:0005840">
    <property type="term" value="C:ribosome"/>
    <property type="evidence" value="ECO:0007669"/>
    <property type="project" value="UniProtKB-KW"/>
</dbReference>
<dbReference type="GO" id="GO:0032040">
    <property type="term" value="C:small-subunit processome"/>
    <property type="evidence" value="ECO:0000250"/>
    <property type="project" value="UniProtKB"/>
</dbReference>
<dbReference type="GO" id="GO:0003735">
    <property type="term" value="F:structural constituent of ribosome"/>
    <property type="evidence" value="ECO:0007669"/>
    <property type="project" value="InterPro"/>
</dbReference>
<dbReference type="GO" id="GO:0002181">
    <property type="term" value="P:cytoplasmic translation"/>
    <property type="evidence" value="ECO:0000250"/>
    <property type="project" value="UniProtKB"/>
</dbReference>
<dbReference type="GO" id="GO:0042274">
    <property type="term" value="P:ribosomal small subunit biogenesis"/>
    <property type="evidence" value="ECO:0000250"/>
    <property type="project" value="UniProtKB"/>
</dbReference>
<dbReference type="FunFam" id="1.20.5.2650:FF:000001">
    <property type="entry name" value="40S ribosomal protein S6"/>
    <property type="match status" value="1"/>
</dbReference>
<dbReference type="Gene3D" id="1.20.5.2650">
    <property type="match status" value="1"/>
</dbReference>
<dbReference type="InterPro" id="IPR001377">
    <property type="entry name" value="Ribosomal_eS6"/>
</dbReference>
<dbReference type="InterPro" id="IPR014401">
    <property type="entry name" value="Ribosomal_eS6-like"/>
</dbReference>
<dbReference type="InterPro" id="IPR018282">
    <property type="entry name" value="Ribosomal_eS6_CS"/>
</dbReference>
<dbReference type="PANTHER" id="PTHR11502">
    <property type="entry name" value="40S RIBOSOMAL PROTEIN S6"/>
    <property type="match status" value="1"/>
</dbReference>
<dbReference type="Pfam" id="PF01092">
    <property type="entry name" value="Ribosomal_S6e"/>
    <property type="match status" value="1"/>
</dbReference>
<dbReference type="PIRSF" id="PIRSF002129">
    <property type="entry name" value="Ribosom_S6_euk"/>
    <property type="match status" value="1"/>
</dbReference>
<dbReference type="SMART" id="SM01405">
    <property type="entry name" value="Ribosomal_S6e"/>
    <property type="match status" value="1"/>
</dbReference>
<dbReference type="PROSITE" id="PS00578">
    <property type="entry name" value="RIBOSOMAL_S6E"/>
    <property type="match status" value="1"/>
</dbReference>
<organism>
    <name type="scientific">Xenopus laevis</name>
    <name type="common">African clawed frog</name>
    <dbReference type="NCBI Taxonomy" id="8355"/>
    <lineage>
        <taxon>Eukaryota</taxon>
        <taxon>Metazoa</taxon>
        <taxon>Chordata</taxon>
        <taxon>Craniata</taxon>
        <taxon>Vertebrata</taxon>
        <taxon>Euteleostomi</taxon>
        <taxon>Amphibia</taxon>
        <taxon>Batrachia</taxon>
        <taxon>Anura</taxon>
        <taxon>Pipoidea</taxon>
        <taxon>Pipidae</taxon>
        <taxon>Xenopodinae</taxon>
        <taxon>Xenopus</taxon>
        <taxon>Xenopus</taxon>
    </lineage>
</organism>
<comment type="function">
    <text evidence="1">Component of the 40S small ribosomal subunit. Plays an important role in controlling cell growth and proliferation through the selective translation of particular classes of mRNA. Part of the small subunit (SSU) processome, first precursor of the small eukaryotic ribosomal subunit. During the assembly of the SSU processome in the nucleolus, many ribosome biogenesis factors, an RNA chaperone and ribosomal proteins associate with the nascent pre-rRNA and work in concert to generate RNA folding, modifications, rearrangements and cleavage as well as targeted degradation of pre-ribosomal RNA by the RNA exosome.</text>
</comment>
<comment type="subunit">
    <text evidence="1">Component of the small ribosomal subunit. Part of the small subunit (SSU) processome, composed of more than 70 proteins and the RNA chaperone small nucleolar RNA (snoRNA) U3.</text>
</comment>
<comment type="subcellular location">
    <subcellularLocation>
        <location evidence="1">Cytoplasm</location>
    </subcellularLocation>
    <subcellularLocation>
        <location evidence="1">Nucleus</location>
        <location evidence="1">Nucleolus</location>
    </subcellularLocation>
</comment>
<comment type="PTM">
    <text evidence="1">Ribosomal protein S6 is the major substrate of protein kinases in eukaryote ribosomes. The phosphorylation is stimulated by growth factors, tumor promoting agents, and mitogens. It is dephosphorylated at growth arrest.</text>
</comment>
<comment type="similarity">
    <text evidence="3">Belongs to the eukaryotic ribosomal protein eS6 family.</text>
</comment>